<keyword id="KW-0066">ATP synthesis</keyword>
<keyword id="KW-0139">CF(1)</keyword>
<keyword id="KW-0375">Hydrogen ion transport</keyword>
<keyword id="KW-0406">Ion transport</keyword>
<keyword id="KW-0472">Membrane</keyword>
<keyword id="KW-1185">Reference proteome</keyword>
<keyword id="KW-0793">Thylakoid</keyword>
<keyword id="KW-0813">Transport</keyword>
<sequence length="182" mass="19566">MPLLNSLATPYAEALLQVTEARSESQTVAEQCKQLLSVWDSSAEFRDAMVSPVLEPSSKKKALQGLLAEQVTPSLMNLLKVLADRQRLQAFEAVMNRFLELYREQQGITLAQVRSAKPLSEAQQAALSKKVQAMAGTSKVDIDLSVDPALIGGFVVSLGSQVIDASLAGQVRRLGLALAKAS</sequence>
<protein>
    <recommendedName>
        <fullName evidence="1">ATP synthase subunit delta</fullName>
    </recommendedName>
    <alternativeName>
        <fullName evidence="1">ATP synthase F(1) sector subunit delta</fullName>
    </alternativeName>
    <alternativeName>
        <fullName evidence="1">F-type ATPase subunit delta</fullName>
        <shortName evidence="1">F-ATPase subunit delta</shortName>
    </alternativeName>
</protein>
<gene>
    <name evidence="1" type="primary">atpH</name>
    <name evidence="1" type="synonym">atpD</name>
    <name type="ordered locus">Syncc9902_0487</name>
</gene>
<feature type="chain" id="PRO_0000371177" description="ATP synthase subunit delta">
    <location>
        <begin position="1"/>
        <end position="182"/>
    </location>
</feature>
<accession>Q3AZM2</accession>
<dbReference type="EMBL" id="CP000097">
    <property type="protein sequence ID" value="ABB25455.1"/>
    <property type="molecule type" value="Genomic_DNA"/>
</dbReference>
<dbReference type="RefSeq" id="WP_011359304.1">
    <property type="nucleotide sequence ID" value="NC_007513.1"/>
</dbReference>
<dbReference type="SMR" id="Q3AZM2"/>
<dbReference type="STRING" id="316279.Syncc9902_0487"/>
<dbReference type="KEGG" id="sye:Syncc9902_0487"/>
<dbReference type="eggNOG" id="COG0712">
    <property type="taxonomic scope" value="Bacteria"/>
</dbReference>
<dbReference type="HOGENOM" id="CLU_085114_4_0_3"/>
<dbReference type="OrthoDB" id="9802471at2"/>
<dbReference type="Proteomes" id="UP000002712">
    <property type="component" value="Chromosome"/>
</dbReference>
<dbReference type="GO" id="GO:0031676">
    <property type="term" value="C:plasma membrane-derived thylakoid membrane"/>
    <property type="evidence" value="ECO:0007669"/>
    <property type="project" value="UniProtKB-SubCell"/>
</dbReference>
<dbReference type="GO" id="GO:0045259">
    <property type="term" value="C:proton-transporting ATP synthase complex"/>
    <property type="evidence" value="ECO:0007669"/>
    <property type="project" value="UniProtKB-KW"/>
</dbReference>
<dbReference type="GO" id="GO:0046933">
    <property type="term" value="F:proton-transporting ATP synthase activity, rotational mechanism"/>
    <property type="evidence" value="ECO:0007669"/>
    <property type="project" value="UniProtKB-UniRule"/>
</dbReference>
<dbReference type="Gene3D" id="1.10.520.20">
    <property type="entry name" value="N-terminal domain of the delta subunit of the F1F0-ATP synthase"/>
    <property type="match status" value="1"/>
</dbReference>
<dbReference type="HAMAP" id="MF_01416">
    <property type="entry name" value="ATP_synth_delta_bact"/>
    <property type="match status" value="1"/>
</dbReference>
<dbReference type="InterPro" id="IPR026015">
    <property type="entry name" value="ATP_synth_OSCP/delta_N_sf"/>
</dbReference>
<dbReference type="InterPro" id="IPR000711">
    <property type="entry name" value="ATPase_OSCP/dsu"/>
</dbReference>
<dbReference type="NCBIfam" id="TIGR01145">
    <property type="entry name" value="ATP_synt_delta"/>
    <property type="match status" value="1"/>
</dbReference>
<dbReference type="PANTHER" id="PTHR11910">
    <property type="entry name" value="ATP SYNTHASE DELTA CHAIN"/>
    <property type="match status" value="1"/>
</dbReference>
<dbReference type="Pfam" id="PF00213">
    <property type="entry name" value="OSCP"/>
    <property type="match status" value="1"/>
</dbReference>
<dbReference type="PRINTS" id="PR00125">
    <property type="entry name" value="ATPASEDELTA"/>
</dbReference>
<dbReference type="SUPFAM" id="SSF47928">
    <property type="entry name" value="N-terminal domain of the delta subunit of the F1F0-ATP synthase"/>
    <property type="match status" value="1"/>
</dbReference>
<proteinExistence type="inferred from homology"/>
<reference key="1">
    <citation type="submission" date="2005-08" db="EMBL/GenBank/DDBJ databases">
        <title>Complete sequence of Synechococcus sp. CC9902.</title>
        <authorList>
            <person name="Copeland A."/>
            <person name="Lucas S."/>
            <person name="Lapidus A."/>
            <person name="Barry K."/>
            <person name="Detter J.C."/>
            <person name="Glavina T."/>
            <person name="Hammon N."/>
            <person name="Israni S."/>
            <person name="Pitluck S."/>
            <person name="Martinez M."/>
            <person name="Schmutz J."/>
            <person name="Larimer F."/>
            <person name="Land M."/>
            <person name="Kyrpides N."/>
            <person name="Ivanova N."/>
            <person name="Richardson P."/>
        </authorList>
    </citation>
    <scope>NUCLEOTIDE SEQUENCE [LARGE SCALE GENOMIC DNA]</scope>
    <source>
        <strain>CC9902</strain>
    </source>
</reference>
<organism>
    <name type="scientific">Synechococcus sp. (strain CC9902)</name>
    <dbReference type="NCBI Taxonomy" id="316279"/>
    <lineage>
        <taxon>Bacteria</taxon>
        <taxon>Bacillati</taxon>
        <taxon>Cyanobacteriota</taxon>
        <taxon>Cyanophyceae</taxon>
        <taxon>Synechococcales</taxon>
        <taxon>Synechococcaceae</taxon>
        <taxon>Synechococcus</taxon>
    </lineage>
</organism>
<evidence type="ECO:0000255" key="1">
    <source>
        <dbReference type="HAMAP-Rule" id="MF_01416"/>
    </source>
</evidence>
<comment type="function">
    <text evidence="1">F(1)F(0) ATP synthase produces ATP from ADP in the presence of a proton or sodium gradient. F-type ATPases consist of two structural domains, F(1) containing the extramembraneous catalytic core and F(0) containing the membrane proton channel, linked together by a central stalk and a peripheral stalk. During catalysis, ATP synthesis in the catalytic domain of F(1) is coupled via a rotary mechanism of the central stalk subunits to proton translocation.</text>
</comment>
<comment type="function">
    <text evidence="1">This protein is part of the stalk that links CF(0) to CF(1). It either transmits conformational changes from CF(0) to CF(1) or is implicated in proton conduction.</text>
</comment>
<comment type="subunit">
    <text evidence="1">F-type ATPases have 2 components, F(1) - the catalytic core - and F(0) - the membrane proton channel. F(1) has five subunits: alpha(3), beta(3), gamma(1), delta(1), epsilon(1). CF(0) has four main subunits: a(1), b(1), b'(1) and c(10-14). The alpha and beta chains form an alternating ring which encloses part of the gamma chain. F(1) is attached to F(0) by a central stalk formed by the gamma and epsilon chains, while a peripheral stalk is formed by the delta, b and b' chains.</text>
</comment>
<comment type="subcellular location">
    <subcellularLocation>
        <location evidence="1">Cellular thylakoid membrane</location>
        <topology evidence="1">Peripheral membrane protein</topology>
    </subcellularLocation>
</comment>
<comment type="similarity">
    <text evidence="1">Belongs to the ATPase delta chain family.</text>
</comment>
<name>ATPD_SYNS9</name>